<dbReference type="EC" id="2.1.1.33" evidence="2"/>
<dbReference type="EMBL" id="AE005174">
    <property type="protein sequence ID" value="AAG58091.1"/>
    <property type="molecule type" value="Genomic_DNA"/>
</dbReference>
<dbReference type="EMBL" id="BA000007">
    <property type="protein sequence ID" value="BAB37259.1"/>
    <property type="molecule type" value="Genomic_DNA"/>
</dbReference>
<dbReference type="RefSeq" id="WP_000786911.1">
    <property type="nucleotide sequence ID" value="NZ_CP028307.1"/>
</dbReference>
<dbReference type="SMR" id="P0A8I6"/>
<dbReference type="STRING" id="155864.Z4305"/>
<dbReference type="GeneID" id="93779031"/>
<dbReference type="KEGG" id="ece:Z4305"/>
<dbReference type="KEGG" id="ecs:ECs_3836"/>
<dbReference type="PATRIC" id="fig|386585.9.peg.4003"/>
<dbReference type="eggNOG" id="COG0220">
    <property type="taxonomic scope" value="Bacteria"/>
</dbReference>
<dbReference type="HOGENOM" id="CLU_050910_0_1_6"/>
<dbReference type="OMA" id="PDPWHKS"/>
<dbReference type="UniPathway" id="UPA00989"/>
<dbReference type="Proteomes" id="UP000000558">
    <property type="component" value="Chromosome"/>
</dbReference>
<dbReference type="Proteomes" id="UP000002519">
    <property type="component" value="Chromosome"/>
</dbReference>
<dbReference type="GO" id="GO:0043527">
    <property type="term" value="C:tRNA methyltransferase complex"/>
    <property type="evidence" value="ECO:0007669"/>
    <property type="project" value="TreeGrafter"/>
</dbReference>
<dbReference type="GO" id="GO:0008176">
    <property type="term" value="F:tRNA (guanine(46)-N7)-methyltransferase activity"/>
    <property type="evidence" value="ECO:0007669"/>
    <property type="project" value="UniProtKB-UniRule"/>
</dbReference>
<dbReference type="FunFam" id="3.40.50.150:FF:000024">
    <property type="entry name" value="tRNA (guanine-N(7)-)-methyltransferase"/>
    <property type="match status" value="1"/>
</dbReference>
<dbReference type="Gene3D" id="3.40.50.150">
    <property type="entry name" value="Vaccinia Virus protein VP39"/>
    <property type="match status" value="1"/>
</dbReference>
<dbReference type="HAMAP" id="MF_01057">
    <property type="entry name" value="tRNA_methyltr_TrmB"/>
    <property type="match status" value="1"/>
</dbReference>
<dbReference type="InterPro" id="IPR029063">
    <property type="entry name" value="SAM-dependent_MTases_sf"/>
</dbReference>
<dbReference type="InterPro" id="IPR003358">
    <property type="entry name" value="tRNA_(Gua-N-7)_MeTrfase_Trmb"/>
</dbReference>
<dbReference type="InterPro" id="IPR055361">
    <property type="entry name" value="tRNA_methyltr_TrmB_bact"/>
</dbReference>
<dbReference type="NCBIfam" id="TIGR00091">
    <property type="entry name" value="tRNA (guanosine(46)-N7)-methyltransferase TrmB"/>
    <property type="match status" value="1"/>
</dbReference>
<dbReference type="PANTHER" id="PTHR23417">
    <property type="entry name" value="3-DEOXY-D-MANNO-OCTULOSONIC-ACID TRANSFERASE/TRNA GUANINE-N 7 - -METHYLTRANSFERASE"/>
    <property type="match status" value="1"/>
</dbReference>
<dbReference type="PANTHER" id="PTHR23417:SF14">
    <property type="entry name" value="PENTACOTRIPEPTIDE-REPEAT REGION OF PRORP DOMAIN-CONTAINING PROTEIN"/>
    <property type="match status" value="1"/>
</dbReference>
<dbReference type="Pfam" id="PF02390">
    <property type="entry name" value="Methyltransf_4"/>
    <property type="match status" value="1"/>
</dbReference>
<dbReference type="SUPFAM" id="SSF53335">
    <property type="entry name" value="S-adenosyl-L-methionine-dependent methyltransferases"/>
    <property type="match status" value="1"/>
</dbReference>
<dbReference type="PROSITE" id="PS51625">
    <property type="entry name" value="SAM_MT_TRMB"/>
    <property type="match status" value="1"/>
</dbReference>
<reference key="1">
    <citation type="journal article" date="2001" name="Nature">
        <title>Genome sequence of enterohaemorrhagic Escherichia coli O157:H7.</title>
        <authorList>
            <person name="Perna N.T."/>
            <person name="Plunkett G. III"/>
            <person name="Burland V."/>
            <person name="Mau B."/>
            <person name="Glasner J.D."/>
            <person name="Rose D.J."/>
            <person name="Mayhew G.F."/>
            <person name="Evans P.S."/>
            <person name="Gregor J."/>
            <person name="Kirkpatrick H.A."/>
            <person name="Posfai G."/>
            <person name="Hackett J."/>
            <person name="Klink S."/>
            <person name="Boutin A."/>
            <person name="Shao Y."/>
            <person name="Miller L."/>
            <person name="Grotbeck E.J."/>
            <person name="Davis N.W."/>
            <person name="Lim A."/>
            <person name="Dimalanta E.T."/>
            <person name="Potamousis K."/>
            <person name="Apodaca J."/>
            <person name="Anantharaman T.S."/>
            <person name="Lin J."/>
            <person name="Yen G."/>
            <person name="Schwartz D.C."/>
            <person name="Welch R.A."/>
            <person name="Blattner F.R."/>
        </authorList>
    </citation>
    <scope>NUCLEOTIDE SEQUENCE [LARGE SCALE GENOMIC DNA]</scope>
    <source>
        <strain>O157:H7 / EDL933 / ATCC 700927 / EHEC</strain>
    </source>
</reference>
<reference key="2">
    <citation type="journal article" date="2001" name="DNA Res.">
        <title>Complete genome sequence of enterohemorrhagic Escherichia coli O157:H7 and genomic comparison with a laboratory strain K-12.</title>
        <authorList>
            <person name="Hayashi T."/>
            <person name="Makino K."/>
            <person name="Ohnishi M."/>
            <person name="Kurokawa K."/>
            <person name="Ishii K."/>
            <person name="Yokoyama K."/>
            <person name="Han C.-G."/>
            <person name="Ohtsubo E."/>
            <person name="Nakayama K."/>
            <person name="Murata T."/>
            <person name="Tanaka M."/>
            <person name="Tobe T."/>
            <person name="Iida T."/>
            <person name="Takami H."/>
            <person name="Honda T."/>
            <person name="Sasakawa C."/>
            <person name="Ogasawara N."/>
            <person name="Yasunaga T."/>
            <person name="Kuhara S."/>
            <person name="Shiba T."/>
            <person name="Hattori M."/>
            <person name="Shinagawa H."/>
        </authorList>
    </citation>
    <scope>NUCLEOTIDE SEQUENCE [LARGE SCALE GENOMIC DNA]</scope>
    <source>
        <strain>O157:H7 / Sakai / RIMD 0509952 / EHEC</strain>
    </source>
</reference>
<feature type="chain" id="PRO_0000171327" description="tRNA (guanine-N(7)-)-methyltransferase">
    <location>
        <begin position="1"/>
        <end position="239"/>
    </location>
</feature>
<feature type="region of interest" description="Interaction with RNA" evidence="2">
    <location>
        <begin position="150"/>
        <end position="155"/>
    </location>
</feature>
<feature type="active site" evidence="1">
    <location>
        <position position="144"/>
    </location>
</feature>
<feature type="binding site" evidence="2">
    <location>
        <position position="69"/>
    </location>
    <ligand>
        <name>S-adenosyl-L-methionine</name>
        <dbReference type="ChEBI" id="CHEBI:59789"/>
    </ligand>
</feature>
<feature type="binding site" evidence="2">
    <location>
        <position position="94"/>
    </location>
    <ligand>
        <name>S-adenosyl-L-methionine</name>
        <dbReference type="ChEBI" id="CHEBI:59789"/>
    </ligand>
</feature>
<feature type="binding site" evidence="2">
    <location>
        <position position="121"/>
    </location>
    <ligand>
        <name>S-adenosyl-L-methionine</name>
        <dbReference type="ChEBI" id="CHEBI:59789"/>
    </ligand>
</feature>
<feature type="binding site" evidence="2">
    <location>
        <position position="144"/>
    </location>
    <ligand>
        <name>S-adenosyl-L-methionine</name>
        <dbReference type="ChEBI" id="CHEBI:59789"/>
    </ligand>
</feature>
<feature type="binding site" evidence="2">
    <location>
        <position position="148"/>
    </location>
    <ligand>
        <name>substrate</name>
    </ligand>
</feature>
<feature type="binding site" evidence="2">
    <location>
        <position position="180"/>
    </location>
    <ligand>
        <name>substrate</name>
    </ligand>
</feature>
<feature type="binding site" evidence="2">
    <location>
        <begin position="217"/>
        <end position="220"/>
    </location>
    <ligand>
        <name>substrate</name>
    </ligand>
</feature>
<protein>
    <recommendedName>
        <fullName evidence="2">tRNA (guanine-N(7)-)-methyltransferase</fullName>
        <ecNumber evidence="2">2.1.1.33</ecNumber>
    </recommendedName>
    <alternativeName>
        <fullName evidence="2">tRNA (guanine(46)-N(7))-methyltransferase</fullName>
    </alternativeName>
    <alternativeName>
        <fullName evidence="2">tRNA(m7G46)-methyltransferase</fullName>
    </alternativeName>
</protein>
<gene>
    <name evidence="2" type="primary">trmB</name>
    <name type="ordered locus">Z4305</name>
    <name type="ordered locus">ECs3836</name>
</gene>
<organism>
    <name type="scientific">Escherichia coli O157:H7</name>
    <dbReference type="NCBI Taxonomy" id="83334"/>
    <lineage>
        <taxon>Bacteria</taxon>
        <taxon>Pseudomonadati</taxon>
        <taxon>Pseudomonadota</taxon>
        <taxon>Gammaproteobacteria</taxon>
        <taxon>Enterobacterales</taxon>
        <taxon>Enterobacteriaceae</taxon>
        <taxon>Escherichia</taxon>
    </lineage>
</organism>
<comment type="function">
    <text evidence="2">Catalyzes the formation of N(7)-methylguanine at position 46 (m7G46) in tRNA.</text>
</comment>
<comment type="catalytic activity">
    <reaction evidence="2">
        <text>guanosine(46) in tRNA + S-adenosyl-L-methionine = N(7)-methylguanosine(46) in tRNA + S-adenosyl-L-homocysteine</text>
        <dbReference type="Rhea" id="RHEA:42708"/>
        <dbReference type="Rhea" id="RHEA-COMP:10188"/>
        <dbReference type="Rhea" id="RHEA-COMP:10189"/>
        <dbReference type="ChEBI" id="CHEBI:57856"/>
        <dbReference type="ChEBI" id="CHEBI:59789"/>
        <dbReference type="ChEBI" id="CHEBI:74269"/>
        <dbReference type="ChEBI" id="CHEBI:74480"/>
        <dbReference type="EC" id="2.1.1.33"/>
    </reaction>
</comment>
<comment type="pathway">
    <text evidence="2">tRNA modification; N(7)-methylguanine-tRNA biosynthesis.</text>
</comment>
<comment type="subunit">
    <text evidence="2">Monomer.</text>
</comment>
<comment type="similarity">
    <text evidence="2">Belongs to the class I-like SAM-binding methyltransferase superfamily. TrmB family.</text>
</comment>
<evidence type="ECO:0000250" key="1"/>
<evidence type="ECO:0000255" key="2">
    <source>
        <dbReference type="HAMAP-Rule" id="MF_01057"/>
    </source>
</evidence>
<proteinExistence type="inferred from homology"/>
<name>TRMB_ECO57</name>
<sequence length="239" mass="27307">MKNDVISPEFDENGRPLRRIRSFVRRQGRLTKGQEHALENYWPVMGVEFSEDMLDFPALFGREAPVTLEIGFGMGASLVAMAKDRPEQDFLGIEVHSPGVGACLASAHEEGLSNLRVMCHDAVEVLHKMIPDNSLRMVQLFFPDPWHKARHNKRRIVQVPFAELVKSKLQLGGVFHMATDWEPYAEHMLEVMSSIDGYKNLSESNDYVPRPASRPVTKFEQRGHRLGHGVWDLMFERVK</sequence>
<keyword id="KW-0489">Methyltransferase</keyword>
<keyword id="KW-1185">Reference proteome</keyword>
<keyword id="KW-0949">S-adenosyl-L-methionine</keyword>
<keyword id="KW-0808">Transferase</keyword>
<keyword id="KW-0819">tRNA processing</keyword>
<accession>P0A8I6</accession>
<accession>P32049</accession>
<accession>P58089</accession>